<organism>
    <name type="scientific">Streptococcus gordonii (strain Challis / ATCC 35105 / BCRC 15272 / CH1 / DL1 / V288)</name>
    <dbReference type="NCBI Taxonomy" id="467705"/>
    <lineage>
        <taxon>Bacteria</taxon>
        <taxon>Bacillati</taxon>
        <taxon>Bacillota</taxon>
        <taxon>Bacilli</taxon>
        <taxon>Lactobacillales</taxon>
        <taxon>Streptococcaceae</taxon>
        <taxon>Streptococcus</taxon>
    </lineage>
</organism>
<name>CLPX_STRGC</name>
<keyword id="KW-0067">ATP-binding</keyword>
<keyword id="KW-0143">Chaperone</keyword>
<keyword id="KW-0479">Metal-binding</keyword>
<keyword id="KW-0547">Nucleotide-binding</keyword>
<keyword id="KW-1185">Reference proteome</keyword>
<keyword id="KW-0862">Zinc</keyword>
<evidence type="ECO:0000255" key="1">
    <source>
        <dbReference type="HAMAP-Rule" id="MF_00175"/>
    </source>
</evidence>
<evidence type="ECO:0000255" key="2">
    <source>
        <dbReference type="PROSITE-ProRule" id="PRU01250"/>
    </source>
</evidence>
<comment type="function">
    <text evidence="1">ATP-dependent specificity component of the Clp protease. It directs the protease to specific substrates. Can perform chaperone functions in the absence of ClpP.</text>
</comment>
<comment type="subunit">
    <text evidence="1">Component of the ClpX-ClpP complex. Forms a hexameric ring that, in the presence of ATP, binds to fourteen ClpP subunits assembled into a disk-like structure with a central cavity, resembling the structure of eukaryotic proteasomes.</text>
</comment>
<comment type="similarity">
    <text evidence="1">Belongs to the ClpX chaperone family.</text>
</comment>
<protein>
    <recommendedName>
        <fullName evidence="1">ATP-dependent Clp protease ATP-binding subunit ClpX</fullName>
    </recommendedName>
</protein>
<feature type="chain" id="PRO_1000077182" description="ATP-dependent Clp protease ATP-binding subunit ClpX">
    <location>
        <begin position="1"/>
        <end position="409"/>
    </location>
</feature>
<feature type="domain" description="ClpX-type ZB" evidence="2">
    <location>
        <begin position="1"/>
        <end position="54"/>
    </location>
</feature>
<feature type="binding site" evidence="2">
    <location>
        <position position="13"/>
    </location>
    <ligand>
        <name>Zn(2+)</name>
        <dbReference type="ChEBI" id="CHEBI:29105"/>
    </ligand>
</feature>
<feature type="binding site" evidence="2">
    <location>
        <position position="16"/>
    </location>
    <ligand>
        <name>Zn(2+)</name>
        <dbReference type="ChEBI" id="CHEBI:29105"/>
    </ligand>
</feature>
<feature type="binding site" evidence="2">
    <location>
        <position position="35"/>
    </location>
    <ligand>
        <name>Zn(2+)</name>
        <dbReference type="ChEBI" id="CHEBI:29105"/>
    </ligand>
</feature>
<feature type="binding site" evidence="2">
    <location>
        <position position="38"/>
    </location>
    <ligand>
        <name>Zn(2+)</name>
        <dbReference type="ChEBI" id="CHEBI:29105"/>
    </ligand>
</feature>
<feature type="binding site" evidence="1">
    <location>
        <begin position="119"/>
        <end position="126"/>
    </location>
    <ligand>
        <name>ATP</name>
        <dbReference type="ChEBI" id="CHEBI:30616"/>
    </ligand>
</feature>
<gene>
    <name evidence="1" type="primary">clpX</name>
    <name type="ordered locus">SGO_1140</name>
</gene>
<sequence>MPTNRNEEMMVYCSFCGKNQDEVQKIIAGNNAFICNECVELAQEIIREELAEEVLADLSEVPKPQELLHILNHYVIGQERAKRALAVAVYNHYKRINFHDSREEDDVELQKSNILMIGPTGSGKTFLAQTLARSLNVPFAIADATALTEAGYVGEDVENILLKLLQAADFNIERAERGIIYVDEIDKIAKKSENVSITRDVSGEGVQQALLKIIEGTVASVPPQGGRKHPQQEMIQVDTKNILFIVGGAFDGIEEIVKQRLGEKIIGFGQNNKAIDENESYMQAIIAEDIQKFGIIPELIGRLPVFAALEQLTVDDLVRILREPKNALVKQYQALLSYDDVKLEFDDDALQEIANKAIERKTGARGLRSIIEETMMDVMFEVPSKENVKLVRITKEAVDGTDKPILETA</sequence>
<dbReference type="EMBL" id="CP000725">
    <property type="protein sequence ID" value="ABV09470.1"/>
    <property type="molecule type" value="Genomic_DNA"/>
</dbReference>
<dbReference type="RefSeq" id="WP_008808666.1">
    <property type="nucleotide sequence ID" value="NC_009785.1"/>
</dbReference>
<dbReference type="SMR" id="A8AXB9"/>
<dbReference type="STRING" id="467705.SGO_1140"/>
<dbReference type="GeneID" id="93787373"/>
<dbReference type="KEGG" id="sgo:SGO_1140"/>
<dbReference type="eggNOG" id="COG1219">
    <property type="taxonomic scope" value="Bacteria"/>
</dbReference>
<dbReference type="HOGENOM" id="CLU_014218_8_2_9"/>
<dbReference type="Proteomes" id="UP000001131">
    <property type="component" value="Chromosome"/>
</dbReference>
<dbReference type="GO" id="GO:0009376">
    <property type="term" value="C:HslUV protease complex"/>
    <property type="evidence" value="ECO:0007669"/>
    <property type="project" value="TreeGrafter"/>
</dbReference>
<dbReference type="GO" id="GO:0005524">
    <property type="term" value="F:ATP binding"/>
    <property type="evidence" value="ECO:0007669"/>
    <property type="project" value="UniProtKB-UniRule"/>
</dbReference>
<dbReference type="GO" id="GO:0016887">
    <property type="term" value="F:ATP hydrolysis activity"/>
    <property type="evidence" value="ECO:0007669"/>
    <property type="project" value="InterPro"/>
</dbReference>
<dbReference type="GO" id="GO:0140662">
    <property type="term" value="F:ATP-dependent protein folding chaperone"/>
    <property type="evidence" value="ECO:0007669"/>
    <property type="project" value="InterPro"/>
</dbReference>
<dbReference type="GO" id="GO:0046983">
    <property type="term" value="F:protein dimerization activity"/>
    <property type="evidence" value="ECO:0007669"/>
    <property type="project" value="InterPro"/>
</dbReference>
<dbReference type="GO" id="GO:0051082">
    <property type="term" value="F:unfolded protein binding"/>
    <property type="evidence" value="ECO:0007669"/>
    <property type="project" value="UniProtKB-UniRule"/>
</dbReference>
<dbReference type="GO" id="GO:0008270">
    <property type="term" value="F:zinc ion binding"/>
    <property type="evidence" value="ECO:0007669"/>
    <property type="project" value="InterPro"/>
</dbReference>
<dbReference type="GO" id="GO:0051301">
    <property type="term" value="P:cell division"/>
    <property type="evidence" value="ECO:0007669"/>
    <property type="project" value="TreeGrafter"/>
</dbReference>
<dbReference type="GO" id="GO:0051603">
    <property type="term" value="P:proteolysis involved in protein catabolic process"/>
    <property type="evidence" value="ECO:0007669"/>
    <property type="project" value="TreeGrafter"/>
</dbReference>
<dbReference type="CDD" id="cd19497">
    <property type="entry name" value="RecA-like_ClpX"/>
    <property type="match status" value="1"/>
</dbReference>
<dbReference type="FunFam" id="1.10.8.60:FF:000002">
    <property type="entry name" value="ATP-dependent Clp protease ATP-binding subunit ClpX"/>
    <property type="match status" value="1"/>
</dbReference>
<dbReference type="FunFam" id="3.40.50.300:FF:000005">
    <property type="entry name" value="ATP-dependent Clp protease ATP-binding subunit ClpX"/>
    <property type="match status" value="1"/>
</dbReference>
<dbReference type="Gene3D" id="1.10.8.60">
    <property type="match status" value="1"/>
</dbReference>
<dbReference type="Gene3D" id="6.20.220.10">
    <property type="entry name" value="ClpX chaperone, C4-type zinc finger domain"/>
    <property type="match status" value="1"/>
</dbReference>
<dbReference type="Gene3D" id="3.40.50.300">
    <property type="entry name" value="P-loop containing nucleotide triphosphate hydrolases"/>
    <property type="match status" value="1"/>
</dbReference>
<dbReference type="HAMAP" id="MF_00175">
    <property type="entry name" value="ClpX"/>
    <property type="match status" value="1"/>
</dbReference>
<dbReference type="InterPro" id="IPR003593">
    <property type="entry name" value="AAA+_ATPase"/>
</dbReference>
<dbReference type="InterPro" id="IPR050052">
    <property type="entry name" value="ATP-dep_Clp_protease_ClpX"/>
</dbReference>
<dbReference type="InterPro" id="IPR003959">
    <property type="entry name" value="ATPase_AAA_core"/>
</dbReference>
<dbReference type="InterPro" id="IPR019489">
    <property type="entry name" value="Clp_ATPase_C"/>
</dbReference>
<dbReference type="InterPro" id="IPR004487">
    <property type="entry name" value="Clp_protease_ATP-bd_su_ClpX"/>
</dbReference>
<dbReference type="InterPro" id="IPR046425">
    <property type="entry name" value="ClpX_bact"/>
</dbReference>
<dbReference type="InterPro" id="IPR027417">
    <property type="entry name" value="P-loop_NTPase"/>
</dbReference>
<dbReference type="InterPro" id="IPR010603">
    <property type="entry name" value="Znf_CppX_C4"/>
</dbReference>
<dbReference type="InterPro" id="IPR038366">
    <property type="entry name" value="Znf_CppX_C4_sf"/>
</dbReference>
<dbReference type="NCBIfam" id="TIGR00382">
    <property type="entry name" value="clpX"/>
    <property type="match status" value="1"/>
</dbReference>
<dbReference type="NCBIfam" id="NF003745">
    <property type="entry name" value="PRK05342.1"/>
    <property type="match status" value="1"/>
</dbReference>
<dbReference type="PANTHER" id="PTHR48102:SF7">
    <property type="entry name" value="ATP-DEPENDENT CLP PROTEASE ATP-BINDING SUBUNIT CLPX-LIKE, MITOCHONDRIAL"/>
    <property type="match status" value="1"/>
</dbReference>
<dbReference type="PANTHER" id="PTHR48102">
    <property type="entry name" value="ATP-DEPENDENT CLP PROTEASE ATP-BINDING SUBUNIT CLPX-LIKE, MITOCHONDRIAL-RELATED"/>
    <property type="match status" value="1"/>
</dbReference>
<dbReference type="Pfam" id="PF07724">
    <property type="entry name" value="AAA_2"/>
    <property type="match status" value="1"/>
</dbReference>
<dbReference type="Pfam" id="PF10431">
    <property type="entry name" value="ClpB_D2-small"/>
    <property type="match status" value="1"/>
</dbReference>
<dbReference type="Pfam" id="PF06689">
    <property type="entry name" value="zf-C4_ClpX"/>
    <property type="match status" value="1"/>
</dbReference>
<dbReference type="SMART" id="SM00382">
    <property type="entry name" value="AAA"/>
    <property type="match status" value="1"/>
</dbReference>
<dbReference type="SMART" id="SM01086">
    <property type="entry name" value="ClpB_D2-small"/>
    <property type="match status" value="1"/>
</dbReference>
<dbReference type="SMART" id="SM00994">
    <property type="entry name" value="zf-C4_ClpX"/>
    <property type="match status" value="1"/>
</dbReference>
<dbReference type="SUPFAM" id="SSF57716">
    <property type="entry name" value="Glucocorticoid receptor-like (DNA-binding domain)"/>
    <property type="match status" value="1"/>
</dbReference>
<dbReference type="SUPFAM" id="SSF52540">
    <property type="entry name" value="P-loop containing nucleoside triphosphate hydrolases"/>
    <property type="match status" value="1"/>
</dbReference>
<dbReference type="PROSITE" id="PS51902">
    <property type="entry name" value="CLPX_ZB"/>
    <property type="match status" value="1"/>
</dbReference>
<proteinExistence type="inferred from homology"/>
<accession>A8AXB9</accession>
<reference key="1">
    <citation type="journal article" date="2007" name="J. Bacteriol.">
        <title>Genome-wide transcriptional changes in Streptococcus gordonii in response to competence signaling peptide.</title>
        <authorList>
            <person name="Vickerman M.M."/>
            <person name="Iobst S."/>
            <person name="Jesionowski A.M."/>
            <person name="Gill S.R."/>
        </authorList>
    </citation>
    <scope>NUCLEOTIDE SEQUENCE [LARGE SCALE GENOMIC DNA]</scope>
    <source>
        <strain>Challis / ATCC 35105 / BCRC 15272 / CH1 / DL1 / V288</strain>
    </source>
</reference>